<feature type="chain" id="PRO_0000253792" description="Protein lin-28 homolog A">
    <location>
        <begin position="1"/>
        <end position="195"/>
    </location>
</feature>
<feature type="domain" description="CSD">
    <location>
        <begin position="33"/>
        <end position="106"/>
    </location>
</feature>
<feature type="zinc finger region" description="CCHC-type 1" evidence="4">
    <location>
        <begin position="131"/>
        <end position="148"/>
    </location>
</feature>
<feature type="zinc finger region" description="CCHC-type 2" evidence="4">
    <location>
        <begin position="153"/>
        <end position="170"/>
    </location>
</feature>
<feature type="region of interest" description="Disordered" evidence="5">
    <location>
        <begin position="98"/>
        <end position="126"/>
    </location>
</feature>
<feature type="region of interest" description="Flexible linker" evidence="1">
    <location>
        <begin position="107"/>
        <end position="130"/>
    </location>
</feature>
<feature type="region of interest" description="Disordered" evidence="5">
    <location>
        <begin position="175"/>
        <end position="195"/>
    </location>
</feature>
<feature type="compositionally biased region" description="Acidic residues" evidence="5">
    <location>
        <begin position="182"/>
        <end position="195"/>
    </location>
</feature>
<feature type="binding site" evidence="1">
    <location>
        <position position="133"/>
    </location>
    <ligand>
        <name>Zn(2+)</name>
        <dbReference type="ChEBI" id="CHEBI:29105"/>
        <label>1</label>
    </ligand>
</feature>
<feature type="binding site" evidence="1">
    <location>
        <position position="136"/>
    </location>
    <ligand>
        <name>Zn(2+)</name>
        <dbReference type="ChEBI" id="CHEBI:29105"/>
        <label>1</label>
    </ligand>
</feature>
<feature type="binding site" evidence="1">
    <location>
        <position position="141"/>
    </location>
    <ligand>
        <name>Zn(2+)</name>
        <dbReference type="ChEBI" id="CHEBI:29105"/>
        <label>1</label>
    </ligand>
</feature>
<feature type="binding site" evidence="1">
    <location>
        <position position="146"/>
    </location>
    <ligand>
        <name>Zn(2+)</name>
        <dbReference type="ChEBI" id="CHEBI:29105"/>
        <label>1</label>
    </ligand>
</feature>
<feature type="binding site" evidence="1">
    <location>
        <position position="155"/>
    </location>
    <ligand>
        <name>Zn(2+)</name>
        <dbReference type="ChEBI" id="CHEBI:29105"/>
        <label>2</label>
    </ligand>
</feature>
<feature type="binding site" evidence="1">
    <location>
        <position position="158"/>
    </location>
    <ligand>
        <name>Zn(2+)</name>
        <dbReference type="ChEBI" id="CHEBI:29105"/>
        <label>2</label>
    </ligand>
</feature>
<feature type="binding site" evidence="1">
    <location>
        <position position="163"/>
    </location>
    <ligand>
        <name>Zn(2+)</name>
        <dbReference type="ChEBI" id="CHEBI:29105"/>
        <label>2</label>
    </ligand>
</feature>
<feature type="binding site" evidence="1">
    <location>
        <position position="168"/>
    </location>
    <ligand>
        <name>Zn(2+)</name>
        <dbReference type="ChEBI" id="CHEBI:29105"/>
        <label>2</label>
    </ligand>
</feature>
<accession>Q5EB47</accession>
<evidence type="ECO:0000250" key="1"/>
<evidence type="ECO:0000250" key="2">
    <source>
        <dbReference type="UniProtKB" id="Q8K3Y3"/>
    </source>
</evidence>
<evidence type="ECO:0000250" key="3">
    <source>
        <dbReference type="UniProtKB" id="Q9H9Z2"/>
    </source>
</evidence>
<evidence type="ECO:0000255" key="4">
    <source>
        <dbReference type="PROSITE-ProRule" id="PRU00047"/>
    </source>
</evidence>
<evidence type="ECO:0000256" key="5">
    <source>
        <dbReference type="SAM" id="MobiDB-lite"/>
    </source>
</evidence>
<evidence type="ECO:0000305" key="6"/>
<keyword id="KW-0963">Cytoplasm</keyword>
<keyword id="KW-0256">Endoplasmic reticulum</keyword>
<keyword id="KW-0479">Metal-binding</keyword>
<keyword id="KW-0539">Nucleus</keyword>
<keyword id="KW-1185">Reference proteome</keyword>
<keyword id="KW-0677">Repeat</keyword>
<keyword id="KW-0694">RNA-binding</keyword>
<keyword id="KW-0943">RNA-mediated gene silencing</keyword>
<keyword id="KW-0862">Zinc</keyword>
<keyword id="KW-0863">Zinc-finger</keyword>
<protein>
    <recommendedName>
        <fullName>Protein lin-28 homolog A</fullName>
        <shortName>Lin-28A</shortName>
    </recommendedName>
</protein>
<name>LN28A_XENTR</name>
<reference key="1">
    <citation type="submission" date="2006-06" db="EMBL/GenBank/DDBJ databases">
        <authorList>
            <consortium name="Sanger Xenopus tropicalis EST/cDNA project"/>
        </authorList>
    </citation>
    <scope>NUCLEOTIDE SEQUENCE [LARGE SCALE MRNA]</scope>
    <source>
        <tissue>Gastrula</tissue>
    </source>
</reference>
<reference key="2">
    <citation type="submission" date="2005-02" db="EMBL/GenBank/DDBJ databases">
        <authorList>
            <consortium name="NIH - Xenopus Gene Collection (XGC) project"/>
        </authorList>
    </citation>
    <scope>NUCLEOTIDE SEQUENCE [LARGE SCALE MRNA]</scope>
    <source>
        <tissue>Embryo</tissue>
    </source>
</reference>
<organism>
    <name type="scientific">Xenopus tropicalis</name>
    <name type="common">Western clawed frog</name>
    <name type="synonym">Silurana tropicalis</name>
    <dbReference type="NCBI Taxonomy" id="8364"/>
    <lineage>
        <taxon>Eukaryota</taxon>
        <taxon>Metazoa</taxon>
        <taxon>Chordata</taxon>
        <taxon>Craniata</taxon>
        <taxon>Vertebrata</taxon>
        <taxon>Euteleostomi</taxon>
        <taxon>Amphibia</taxon>
        <taxon>Batrachia</taxon>
        <taxon>Anura</taxon>
        <taxon>Pipoidea</taxon>
        <taxon>Pipidae</taxon>
        <taxon>Xenopodinae</taxon>
        <taxon>Xenopus</taxon>
        <taxon>Silurana</taxon>
    </lineage>
</organism>
<gene>
    <name type="primary">lin28a</name>
    <name type="synonym">lin28</name>
    <name type="ORF">TGas109o22.1</name>
</gene>
<sequence>MGSVSNQEITGGLPKSLDETADIHKSDESLIFQGSGVCKWFNVRMGFGFLTMTKKEGTDLETPVDVFVHQSKLHMEGFRSLKEGESVEFTFKKSSKGLESTRVTGPGGAPCIGSERRPKVKGQQKRRQKGDRCYNCGGLDHHAKECKLPPQPKKCHFCQSPNHMVAQCPAKASQAANLEEQPISEEQELIPETME</sequence>
<proteinExistence type="evidence at transcript level"/>
<comment type="function">
    <text evidence="2 3">RNA-binding protein that inhibits processing of pre-let-7 miRNAs and regulates translation of mRNAs that control developmental timing, pluripotency and metabolism. Seems to recognize a common structural G-quartet (G4) feature in its miRNA and mRNA targets (By similarity). 'Translational enhancer' that drives specific mRNAs to polysomes and increases the efficiency of protein synthesis. Its association with the translational machinery and target mRNAs results in an increased number of initiation events per molecule of mRNA and, indirectly, in mRNA stabilization. Suppressor of microRNA (miRNA) biogenesis, including that of let-7. Binds specific target miRNA precursors (pre-miRNAs), recognizing an 5'-GGAG-3' motif found in their terminal loop, and recruits uridylyltransferase. This results in the terminal uridylation of target pre-miRNAs. Uridylated pre-miRNAs fail to be processed by Dicer and undergo degradation (By similarity). Localized to the periendoplasmic reticulum area, binds to a large number of spliced mRNAs and inhibits the translation of mRNAs destined for the ER, reducing the synthesis of transmembrane proteins, ER or Golgi lumen proteins, and secretory proteins. Binds to and enhances the translation of mRNAs for several metabolic enzymes, increasing glycolysis and oxidative phosphorylation. Which, with the let-7 repression may enhance tissue repair in adult tissue (By similarity).</text>
</comment>
<comment type="subunit">
    <text evidence="2">Monomer.</text>
</comment>
<comment type="subcellular location">
    <subcellularLocation>
        <location evidence="2">Cytoplasm</location>
    </subcellularLocation>
    <subcellularLocation>
        <location evidence="2">Rough endoplasmic reticulum</location>
    </subcellularLocation>
    <subcellularLocation>
        <location evidence="3">Cytoplasm</location>
        <location evidence="3">P-body</location>
    </subcellularLocation>
    <subcellularLocation>
        <location evidence="2">Cytoplasm</location>
        <location evidence="2">Stress granule</location>
    </subcellularLocation>
    <subcellularLocation>
        <location evidence="2">Nucleus</location>
        <location evidence="2">Nucleolus</location>
    </subcellularLocation>
    <text evidence="2">Predominantly cytoplasmic. In the cytoplasm, localizes to peri-endoplasmic reticulum regions and may be bound to the cytosolic surface of rough endoplasmic reticulum (ER) on which ER-associated mRNAs are translated. Shuttle from the nucleus to the cytoplasm requires RNA-binding.</text>
</comment>
<comment type="domain">
    <text evidence="1">The CCHC zinc fingers interact with the GGAG motif at the 3' end of let-7 miRNAs precursors, more generally they bind the 5'-NGNNG-3' consensus motif with micromolar affinity. The CSD domain recognizes the loop at the 5' end. The flexible linker allows accommodating variable sequences and lengths among let-7 family members (By similarity).</text>
</comment>
<comment type="similarity">
    <text evidence="6">Belongs to the lin-28 family.</text>
</comment>
<dbReference type="EMBL" id="CR761690">
    <property type="protein sequence ID" value="CAJ82571.1"/>
    <property type="molecule type" value="mRNA"/>
</dbReference>
<dbReference type="EMBL" id="BC090084">
    <property type="protein sequence ID" value="AAH90084.1"/>
    <property type="molecule type" value="mRNA"/>
</dbReference>
<dbReference type="RefSeq" id="NP_001015806.2">
    <property type="nucleotide sequence ID" value="NM_001015806.2"/>
</dbReference>
<dbReference type="RefSeq" id="NP_001016266.1">
    <property type="nucleotide sequence ID" value="NM_001016266.2"/>
</dbReference>
<dbReference type="RefSeq" id="XP_017946715.1">
    <property type="nucleotide sequence ID" value="XM_018091226.2"/>
</dbReference>
<dbReference type="SMR" id="Q5EB47"/>
<dbReference type="FunCoup" id="Q5EB47">
    <property type="interactions" value="383"/>
</dbReference>
<dbReference type="STRING" id="8364.ENSXETP00000037699"/>
<dbReference type="PaxDb" id="8364-ENSXETP00000026953"/>
<dbReference type="DNASU" id="548523"/>
<dbReference type="GeneID" id="548523"/>
<dbReference type="KEGG" id="xtr:548523"/>
<dbReference type="AGR" id="Xenbase:XB-GENE-491384"/>
<dbReference type="CTD" id="79727"/>
<dbReference type="Xenbase" id="XB-GENE-491384">
    <property type="gene designation" value="lin28a"/>
</dbReference>
<dbReference type="eggNOG" id="KOG3070">
    <property type="taxonomic scope" value="Eukaryota"/>
</dbReference>
<dbReference type="HOGENOM" id="CLU_089169_4_0_1"/>
<dbReference type="InParanoid" id="Q5EB47"/>
<dbReference type="OMA" id="KACYGCH"/>
<dbReference type="OrthoDB" id="422005at2759"/>
<dbReference type="PhylomeDB" id="Q5EB47"/>
<dbReference type="Proteomes" id="UP000008143">
    <property type="component" value="Chromosome 2"/>
</dbReference>
<dbReference type="Bgee" id="ENSXETG00000012324">
    <property type="expression patterns" value="Expressed in neurula embryo and 13 other cell types or tissues"/>
</dbReference>
<dbReference type="ExpressionAtlas" id="Q5EB47">
    <property type="expression patterns" value="baseline"/>
</dbReference>
<dbReference type="GO" id="GO:0005737">
    <property type="term" value="C:cytoplasm"/>
    <property type="evidence" value="ECO:0000250"/>
    <property type="project" value="UniProtKB"/>
</dbReference>
<dbReference type="GO" id="GO:0010494">
    <property type="term" value="C:cytoplasmic stress granule"/>
    <property type="evidence" value="ECO:0000250"/>
    <property type="project" value="UniProtKB"/>
</dbReference>
<dbReference type="GO" id="GO:0005730">
    <property type="term" value="C:nucleolus"/>
    <property type="evidence" value="ECO:0007669"/>
    <property type="project" value="UniProtKB-SubCell"/>
</dbReference>
<dbReference type="GO" id="GO:0005634">
    <property type="term" value="C:nucleus"/>
    <property type="evidence" value="ECO:0000250"/>
    <property type="project" value="UniProtKB"/>
</dbReference>
<dbReference type="GO" id="GO:0000932">
    <property type="term" value="C:P-body"/>
    <property type="evidence" value="ECO:0000250"/>
    <property type="project" value="UniProtKB"/>
</dbReference>
<dbReference type="GO" id="GO:0005791">
    <property type="term" value="C:rough endoplasmic reticulum"/>
    <property type="evidence" value="ECO:0007669"/>
    <property type="project" value="UniProtKB-SubCell"/>
</dbReference>
<dbReference type="GO" id="GO:0003729">
    <property type="term" value="F:mRNA binding"/>
    <property type="evidence" value="ECO:0000250"/>
    <property type="project" value="UniProtKB"/>
</dbReference>
<dbReference type="GO" id="GO:0003723">
    <property type="term" value="F:RNA binding"/>
    <property type="evidence" value="ECO:0000250"/>
    <property type="project" value="UniProtKB"/>
</dbReference>
<dbReference type="GO" id="GO:0008270">
    <property type="term" value="F:zinc ion binding"/>
    <property type="evidence" value="ECO:0007669"/>
    <property type="project" value="UniProtKB-KW"/>
</dbReference>
<dbReference type="GO" id="GO:2000767">
    <property type="term" value="P:positive regulation of cytoplasmic translation"/>
    <property type="evidence" value="ECO:0000250"/>
    <property type="project" value="UniProtKB"/>
</dbReference>
<dbReference type="GO" id="GO:0031054">
    <property type="term" value="P:pre-miRNA processing"/>
    <property type="evidence" value="ECO:0000250"/>
    <property type="project" value="UniProtKB"/>
</dbReference>
<dbReference type="GO" id="GO:0019827">
    <property type="term" value="P:stem cell population maintenance"/>
    <property type="evidence" value="ECO:0000250"/>
    <property type="project" value="UniProtKB"/>
</dbReference>
<dbReference type="CDD" id="cd04458">
    <property type="entry name" value="CSP_CDS"/>
    <property type="match status" value="1"/>
</dbReference>
<dbReference type="FunFam" id="4.10.60.10:FF:000007">
    <property type="entry name" value="Protein lin-28 homolog A"/>
    <property type="match status" value="1"/>
</dbReference>
<dbReference type="FunFam" id="2.40.50.140:FF:000087">
    <property type="entry name" value="Protein lin-28 homolog B"/>
    <property type="match status" value="1"/>
</dbReference>
<dbReference type="Gene3D" id="2.40.50.140">
    <property type="entry name" value="Nucleic acid-binding proteins"/>
    <property type="match status" value="1"/>
</dbReference>
<dbReference type="Gene3D" id="4.10.60.10">
    <property type="entry name" value="Zinc finger, CCHC-type"/>
    <property type="match status" value="1"/>
</dbReference>
<dbReference type="InterPro" id="IPR011129">
    <property type="entry name" value="CSD"/>
</dbReference>
<dbReference type="InterPro" id="IPR002059">
    <property type="entry name" value="CSP_DNA-bd"/>
</dbReference>
<dbReference type="InterPro" id="IPR051373">
    <property type="entry name" value="Lin-28_RNA-binding"/>
</dbReference>
<dbReference type="InterPro" id="IPR054081">
    <property type="entry name" value="Lin-28A-like_Znf-CCHC_2"/>
</dbReference>
<dbReference type="InterPro" id="IPR012340">
    <property type="entry name" value="NA-bd_OB-fold"/>
</dbReference>
<dbReference type="InterPro" id="IPR001878">
    <property type="entry name" value="Znf_CCHC"/>
</dbReference>
<dbReference type="InterPro" id="IPR036875">
    <property type="entry name" value="Znf_CCHC_sf"/>
</dbReference>
<dbReference type="PANTHER" id="PTHR46109">
    <property type="entry name" value="PROTEIN LIN-28"/>
    <property type="match status" value="1"/>
</dbReference>
<dbReference type="PANTHER" id="PTHR46109:SF2">
    <property type="entry name" value="PROTEIN LIN-28 HOMOLOG A"/>
    <property type="match status" value="1"/>
</dbReference>
<dbReference type="Pfam" id="PF00313">
    <property type="entry name" value="CSD"/>
    <property type="match status" value="1"/>
</dbReference>
<dbReference type="Pfam" id="PF21890">
    <property type="entry name" value="Lin-28A-like_zf-CCHC_2"/>
    <property type="match status" value="1"/>
</dbReference>
<dbReference type="Pfam" id="PF00098">
    <property type="entry name" value="zf-CCHC"/>
    <property type="match status" value="1"/>
</dbReference>
<dbReference type="PRINTS" id="PR00050">
    <property type="entry name" value="COLDSHOCK"/>
</dbReference>
<dbReference type="SMART" id="SM00357">
    <property type="entry name" value="CSP"/>
    <property type="match status" value="1"/>
</dbReference>
<dbReference type="SMART" id="SM00343">
    <property type="entry name" value="ZnF_C2HC"/>
    <property type="match status" value="2"/>
</dbReference>
<dbReference type="SUPFAM" id="SSF50249">
    <property type="entry name" value="Nucleic acid-binding proteins"/>
    <property type="match status" value="1"/>
</dbReference>
<dbReference type="SUPFAM" id="SSF57756">
    <property type="entry name" value="Retrovirus zinc finger-like domains"/>
    <property type="match status" value="1"/>
</dbReference>
<dbReference type="PROSITE" id="PS51857">
    <property type="entry name" value="CSD_2"/>
    <property type="match status" value="1"/>
</dbReference>
<dbReference type="PROSITE" id="PS50158">
    <property type="entry name" value="ZF_CCHC"/>
    <property type="match status" value="1"/>
</dbReference>